<comment type="function">
    <text evidence="1">The electron transfer flavoprotein serves as a specific electron acceptor for several dehydrogenases, including five acyl-CoA dehydrogenases, glutaryl-CoA and sarcosine dehydrogenase. It transfers the electrons to the main mitochondrial respiratory chain via ETF-ubiquinone oxidoreductase (ETF dehydrogenase) (By similarity).</text>
</comment>
<comment type="cofactor">
    <cofactor evidence="1">
        <name>FAD</name>
        <dbReference type="ChEBI" id="CHEBI:57692"/>
    </cofactor>
    <text evidence="1">Binds 1 FAD per dimer.</text>
</comment>
<comment type="subunit">
    <text evidence="1">Heterodimer of an alpha and a beta subunit.</text>
</comment>
<comment type="subcellular location">
    <subcellularLocation>
        <location evidence="1">Mitochondrion matrix</location>
    </subcellularLocation>
</comment>
<comment type="similarity">
    <text evidence="3">Belongs to the ETF alpha-subunit/FixB family.</text>
</comment>
<gene>
    <name type="ORF">F27D4.1</name>
</gene>
<reference key="1">
    <citation type="journal article" date="1998" name="Science">
        <title>Genome sequence of the nematode C. elegans: a platform for investigating biology.</title>
        <authorList>
            <consortium name="The C. elegans sequencing consortium"/>
        </authorList>
    </citation>
    <scope>NUCLEOTIDE SEQUENCE [LARGE SCALE GENOMIC DNA]</scope>
    <source>
        <strain>Bristol N2</strain>
    </source>
</reference>
<keyword id="KW-0249">Electron transport</keyword>
<keyword id="KW-0274">FAD</keyword>
<keyword id="KW-0285">Flavoprotein</keyword>
<keyword id="KW-0496">Mitochondrion</keyword>
<keyword id="KW-1185">Reference proteome</keyword>
<keyword id="KW-0809">Transit peptide</keyword>
<keyword id="KW-0813">Transport</keyword>
<sequence length="332" mass="34455">MLSARTVLSRAGLISNASRLNSTLVVAEHDETKLAPITLNAITAASKLGNEVSVLVTGANATKVAEQVAKVNGVKRVLVAQDEKLKNNLPERVAPVILASQKQFNFTAITAGSSAFGRGVIPRVAAKLDVSSISDVTEVHSADSFTRTLYAGNAVKKVKSTAPIKLLTFRGTSFEPAKEGGSGAVENAPSADIKTDLSEFLGQELSKSERPDLATAKVVVSGGRGLKSGDNFKLIYDLADKLGAGVGASRAAVDAGYVPNDMQVGQTGKIVAPELYIAIGISGAIQHLAGMKDSKVIVAINKDPDAPIFQVADIGLKADLFKAVPELTAALP</sequence>
<dbReference type="EMBL" id="Z79695">
    <property type="protein sequence ID" value="CAB01967.2"/>
    <property type="molecule type" value="Genomic_DNA"/>
</dbReference>
<dbReference type="EMBL" id="Z81130">
    <property type="protein sequence ID" value="CAB01967.2"/>
    <property type="status" value="JOINED"/>
    <property type="molecule type" value="Genomic_DNA"/>
</dbReference>
<dbReference type="PIR" id="D87839">
    <property type="entry name" value="D87839"/>
</dbReference>
<dbReference type="PIR" id="T21451">
    <property type="entry name" value="T21451"/>
</dbReference>
<dbReference type="SMR" id="Q93615"/>
<dbReference type="BioGRID" id="37977">
    <property type="interactions" value="20"/>
</dbReference>
<dbReference type="FunCoup" id="Q93615">
    <property type="interactions" value="1709"/>
</dbReference>
<dbReference type="STRING" id="6239.F27D4.1.1"/>
<dbReference type="PaxDb" id="6239-F27D4.1"/>
<dbReference type="PeptideAtlas" id="Q93615"/>
<dbReference type="EnsemblMetazoa" id="F27D4.1.1">
    <property type="protein sequence ID" value="F27D4.1.1"/>
    <property type="gene ID" value="WBGene00009187"/>
</dbReference>
<dbReference type="KEGG" id="cel:CELE_F27D4.1"/>
<dbReference type="UCSC" id="F27D4.1">
    <property type="organism name" value="c. elegans"/>
</dbReference>
<dbReference type="AGR" id="WB:WBGene00009187"/>
<dbReference type="CTD" id="172535"/>
<dbReference type="WormBase" id="F27D4.1">
    <property type="protein sequence ID" value="CE24926"/>
    <property type="gene ID" value="WBGene00009187"/>
</dbReference>
<dbReference type="eggNOG" id="KOG3954">
    <property type="taxonomic scope" value="Eukaryota"/>
</dbReference>
<dbReference type="GeneTree" id="ENSGT00940000167435"/>
<dbReference type="HOGENOM" id="CLU_034178_0_0_1"/>
<dbReference type="InParanoid" id="Q93615"/>
<dbReference type="OMA" id="WRPYAEQ"/>
<dbReference type="OrthoDB" id="1715808at2759"/>
<dbReference type="PhylomeDB" id="Q93615"/>
<dbReference type="Reactome" id="R-CEL-611105">
    <property type="pathway name" value="Respiratory electron transport"/>
</dbReference>
<dbReference type="PRO" id="PR:Q93615"/>
<dbReference type="Proteomes" id="UP000001940">
    <property type="component" value="Chromosome I"/>
</dbReference>
<dbReference type="Bgee" id="WBGene00009187">
    <property type="expression patterns" value="Expressed in adult organism and 4 other cell types or tissues"/>
</dbReference>
<dbReference type="GO" id="GO:0005759">
    <property type="term" value="C:mitochondrial matrix"/>
    <property type="evidence" value="ECO:0007669"/>
    <property type="project" value="UniProtKB-SubCell"/>
</dbReference>
<dbReference type="GO" id="GO:0005739">
    <property type="term" value="C:mitochondrion"/>
    <property type="evidence" value="ECO:0007005"/>
    <property type="project" value="WormBase"/>
</dbReference>
<dbReference type="GO" id="GO:0009055">
    <property type="term" value="F:electron transfer activity"/>
    <property type="evidence" value="ECO:0000318"/>
    <property type="project" value="GO_Central"/>
</dbReference>
<dbReference type="GO" id="GO:0050660">
    <property type="term" value="F:flavin adenine dinucleotide binding"/>
    <property type="evidence" value="ECO:0000318"/>
    <property type="project" value="GO_Central"/>
</dbReference>
<dbReference type="GO" id="GO:0033539">
    <property type="term" value="P:fatty acid beta-oxidation using acyl-CoA dehydrogenase"/>
    <property type="evidence" value="ECO:0000318"/>
    <property type="project" value="GO_Central"/>
</dbReference>
<dbReference type="CDD" id="cd01715">
    <property type="entry name" value="ETF_alpha"/>
    <property type="match status" value="1"/>
</dbReference>
<dbReference type="FunFam" id="3.40.50.620:FF:000041">
    <property type="entry name" value="Electron transfer flavoprotein alpha subunit"/>
    <property type="match status" value="1"/>
</dbReference>
<dbReference type="FunFam" id="3.40.50.1220:FF:000001">
    <property type="entry name" value="Electron transfer flavoprotein, alpha subunit"/>
    <property type="match status" value="1"/>
</dbReference>
<dbReference type="Gene3D" id="3.40.50.620">
    <property type="entry name" value="HUPs"/>
    <property type="match status" value="1"/>
</dbReference>
<dbReference type="Gene3D" id="3.40.50.1220">
    <property type="entry name" value="TPP-binding domain"/>
    <property type="match status" value="1"/>
</dbReference>
<dbReference type="InterPro" id="IPR029035">
    <property type="entry name" value="DHS-like_NAD/FAD-binding_dom"/>
</dbReference>
<dbReference type="InterPro" id="IPR014730">
    <property type="entry name" value="ETF_a/b_N"/>
</dbReference>
<dbReference type="InterPro" id="IPR001308">
    <property type="entry name" value="ETF_a/FixB"/>
</dbReference>
<dbReference type="InterPro" id="IPR033947">
    <property type="entry name" value="ETF_alpha_N"/>
</dbReference>
<dbReference type="InterPro" id="IPR014731">
    <property type="entry name" value="ETF_asu_C"/>
</dbReference>
<dbReference type="InterPro" id="IPR018206">
    <property type="entry name" value="ETF_asu_C_CS"/>
</dbReference>
<dbReference type="InterPro" id="IPR014729">
    <property type="entry name" value="Rossmann-like_a/b/a_fold"/>
</dbReference>
<dbReference type="PANTHER" id="PTHR43153">
    <property type="entry name" value="ELECTRON TRANSFER FLAVOPROTEIN ALPHA"/>
    <property type="match status" value="1"/>
</dbReference>
<dbReference type="PANTHER" id="PTHR43153:SF1">
    <property type="entry name" value="ELECTRON TRANSFER FLAVOPROTEIN SUBUNIT ALPHA, MITOCHONDRIAL"/>
    <property type="match status" value="1"/>
</dbReference>
<dbReference type="Pfam" id="PF01012">
    <property type="entry name" value="ETF"/>
    <property type="match status" value="1"/>
</dbReference>
<dbReference type="Pfam" id="PF00766">
    <property type="entry name" value="ETF_alpha"/>
    <property type="match status" value="1"/>
</dbReference>
<dbReference type="PIRSF" id="PIRSF000089">
    <property type="entry name" value="Electra_flavoP_a"/>
    <property type="match status" value="1"/>
</dbReference>
<dbReference type="SMART" id="SM00893">
    <property type="entry name" value="ETF"/>
    <property type="match status" value="1"/>
</dbReference>
<dbReference type="SUPFAM" id="SSF52402">
    <property type="entry name" value="Adenine nucleotide alpha hydrolases-like"/>
    <property type="match status" value="1"/>
</dbReference>
<dbReference type="SUPFAM" id="SSF52467">
    <property type="entry name" value="DHS-like NAD/FAD-binding domain"/>
    <property type="match status" value="1"/>
</dbReference>
<dbReference type="PROSITE" id="PS00696">
    <property type="entry name" value="ETF_ALPHA"/>
    <property type="match status" value="1"/>
</dbReference>
<proteinExistence type="inferred from homology"/>
<organism>
    <name type="scientific">Caenorhabditis elegans</name>
    <dbReference type="NCBI Taxonomy" id="6239"/>
    <lineage>
        <taxon>Eukaryota</taxon>
        <taxon>Metazoa</taxon>
        <taxon>Ecdysozoa</taxon>
        <taxon>Nematoda</taxon>
        <taxon>Chromadorea</taxon>
        <taxon>Rhabditida</taxon>
        <taxon>Rhabditina</taxon>
        <taxon>Rhabditomorpha</taxon>
        <taxon>Rhabditoidea</taxon>
        <taxon>Rhabditidae</taxon>
        <taxon>Peloderinae</taxon>
        <taxon>Caenorhabditis</taxon>
    </lineage>
</organism>
<protein>
    <recommendedName>
        <fullName>Probable electron transfer flavoprotein subunit alpha, mitochondrial</fullName>
        <shortName>Alpha-ETF</shortName>
    </recommendedName>
</protein>
<name>ETFA_CAEEL</name>
<evidence type="ECO:0000250" key="1"/>
<evidence type="ECO:0000255" key="2"/>
<evidence type="ECO:0000305" key="3"/>
<feature type="transit peptide" description="Mitochondrion" evidence="2">
    <location>
        <begin position="1"/>
        <end status="unknown"/>
    </location>
</feature>
<feature type="chain" id="PRO_0000008655" description="Probable electron transfer flavoprotein subunit alpha, mitochondrial">
    <location>
        <begin status="unknown"/>
        <end position="332"/>
    </location>
</feature>
<feature type="binding site" evidence="2">
    <location>
        <begin position="275"/>
        <end position="303"/>
    </location>
    <ligand>
        <name>FAD</name>
        <dbReference type="ChEBI" id="CHEBI:57692"/>
    </ligand>
</feature>
<accession>Q93615</accession>
<accession>Q9U5I1</accession>